<comment type="catalytic activity">
    <reaction>
        <text>[thioredoxin]-dithiol + NADP(+) = [thioredoxin]-disulfide + NADPH + H(+)</text>
        <dbReference type="Rhea" id="RHEA:20345"/>
        <dbReference type="Rhea" id="RHEA-COMP:10698"/>
        <dbReference type="Rhea" id="RHEA-COMP:10700"/>
        <dbReference type="ChEBI" id="CHEBI:15378"/>
        <dbReference type="ChEBI" id="CHEBI:29950"/>
        <dbReference type="ChEBI" id="CHEBI:50058"/>
        <dbReference type="ChEBI" id="CHEBI:57783"/>
        <dbReference type="ChEBI" id="CHEBI:58349"/>
        <dbReference type="EC" id="1.8.1.9"/>
    </reaction>
</comment>
<comment type="cofactor">
    <cofactor evidence="2">
        <name>FAD</name>
        <dbReference type="ChEBI" id="CHEBI:57692"/>
    </cofactor>
    <text evidence="2">Binds 1 FAD per subunit.</text>
</comment>
<comment type="subunit">
    <text evidence="2">Homodimer.</text>
</comment>
<comment type="subcellular location">
    <subcellularLocation>
        <location evidence="1">Cytoplasm</location>
    </subcellularLocation>
</comment>
<comment type="miscellaneous">
    <text>The active site is a redox-active disulfide bond.</text>
</comment>
<comment type="similarity">
    <text evidence="3">Belongs to the class-II pyridine nucleotide-disulfide oxidoreductase family.</text>
</comment>
<name>TRXB_VIBCH</name>
<evidence type="ECO:0000250" key="1"/>
<evidence type="ECO:0000250" key="2">
    <source>
        <dbReference type="UniProtKB" id="P0A9P4"/>
    </source>
</evidence>
<evidence type="ECO:0000305" key="3"/>
<feature type="chain" id="PRO_0000166756" description="Thioredoxin reductase">
    <location>
        <begin position="1"/>
        <end position="318"/>
    </location>
</feature>
<feature type="binding site" evidence="2">
    <location>
        <begin position="36"/>
        <end position="43"/>
    </location>
    <ligand>
        <name>FAD</name>
        <dbReference type="ChEBI" id="CHEBI:57692"/>
    </ligand>
</feature>
<feature type="binding site" evidence="2">
    <location>
        <begin position="286"/>
        <end position="295"/>
    </location>
    <ligand>
        <name>FAD</name>
        <dbReference type="ChEBI" id="CHEBI:57692"/>
    </ligand>
</feature>
<feature type="disulfide bond" description="Redox-active" evidence="2">
    <location>
        <begin position="136"/>
        <end position="139"/>
    </location>
</feature>
<protein>
    <recommendedName>
        <fullName>Thioredoxin reductase</fullName>
        <shortName>TRXR</shortName>
        <ecNumber>1.8.1.9</ecNumber>
    </recommendedName>
</protein>
<dbReference type="EC" id="1.8.1.9"/>
<dbReference type="EMBL" id="AE003852">
    <property type="protein sequence ID" value="AAF94341.1"/>
    <property type="molecule type" value="Genomic_DNA"/>
</dbReference>
<dbReference type="PIR" id="C82231">
    <property type="entry name" value="C82231"/>
</dbReference>
<dbReference type="RefSeq" id="NP_230827.1">
    <property type="nucleotide sequence ID" value="NC_002505.1"/>
</dbReference>
<dbReference type="RefSeq" id="WP_000073137.1">
    <property type="nucleotide sequence ID" value="NZ_LT906614.1"/>
</dbReference>
<dbReference type="SMR" id="Q9KSS4"/>
<dbReference type="STRING" id="243277.VC_1182"/>
<dbReference type="DNASU" id="2614615"/>
<dbReference type="EnsemblBacteria" id="AAF94341">
    <property type="protein sequence ID" value="AAF94341"/>
    <property type="gene ID" value="VC_1182"/>
</dbReference>
<dbReference type="KEGG" id="vch:VC_1182"/>
<dbReference type="PATRIC" id="fig|243277.26.peg.1130"/>
<dbReference type="eggNOG" id="COG0492">
    <property type="taxonomic scope" value="Bacteria"/>
</dbReference>
<dbReference type="HOGENOM" id="CLU_031864_5_1_6"/>
<dbReference type="Proteomes" id="UP000000584">
    <property type="component" value="Chromosome 1"/>
</dbReference>
<dbReference type="GO" id="GO:0005737">
    <property type="term" value="C:cytoplasm"/>
    <property type="evidence" value="ECO:0007669"/>
    <property type="project" value="UniProtKB-SubCell"/>
</dbReference>
<dbReference type="GO" id="GO:0004791">
    <property type="term" value="F:thioredoxin-disulfide reductase (NADPH) activity"/>
    <property type="evidence" value="ECO:0000318"/>
    <property type="project" value="GO_Central"/>
</dbReference>
<dbReference type="GO" id="GO:0045454">
    <property type="term" value="P:cell redox homeostasis"/>
    <property type="evidence" value="ECO:0000318"/>
    <property type="project" value="GO_Central"/>
</dbReference>
<dbReference type="GO" id="GO:0019430">
    <property type="term" value="P:removal of superoxide radicals"/>
    <property type="evidence" value="ECO:0007669"/>
    <property type="project" value="InterPro"/>
</dbReference>
<dbReference type="FunFam" id="3.50.50.60:FF:000007">
    <property type="entry name" value="Alkyl hydroperoxide reductase, F subunit"/>
    <property type="match status" value="1"/>
</dbReference>
<dbReference type="Gene3D" id="3.50.50.60">
    <property type="entry name" value="FAD/NAD(P)-binding domain"/>
    <property type="match status" value="2"/>
</dbReference>
<dbReference type="InterPro" id="IPR036188">
    <property type="entry name" value="FAD/NAD-bd_sf"/>
</dbReference>
<dbReference type="InterPro" id="IPR023753">
    <property type="entry name" value="FAD/NAD-binding_dom"/>
</dbReference>
<dbReference type="InterPro" id="IPR050097">
    <property type="entry name" value="Ferredoxin-NADP_redctase_2"/>
</dbReference>
<dbReference type="InterPro" id="IPR008255">
    <property type="entry name" value="Pyr_nucl-diS_OxRdtase_2_AS"/>
</dbReference>
<dbReference type="InterPro" id="IPR005982">
    <property type="entry name" value="Thioredox_Rdtase"/>
</dbReference>
<dbReference type="NCBIfam" id="TIGR01292">
    <property type="entry name" value="TRX_reduct"/>
    <property type="match status" value="1"/>
</dbReference>
<dbReference type="PANTHER" id="PTHR48105">
    <property type="entry name" value="THIOREDOXIN REDUCTASE 1-RELATED-RELATED"/>
    <property type="match status" value="1"/>
</dbReference>
<dbReference type="Pfam" id="PF07992">
    <property type="entry name" value="Pyr_redox_2"/>
    <property type="match status" value="1"/>
</dbReference>
<dbReference type="PRINTS" id="PR00368">
    <property type="entry name" value="FADPNR"/>
</dbReference>
<dbReference type="PRINTS" id="PR00469">
    <property type="entry name" value="PNDRDTASEII"/>
</dbReference>
<dbReference type="SUPFAM" id="SSF51905">
    <property type="entry name" value="FAD/NAD(P)-binding domain"/>
    <property type="match status" value="1"/>
</dbReference>
<dbReference type="PROSITE" id="PS00573">
    <property type="entry name" value="PYRIDINE_REDOX_2"/>
    <property type="match status" value="1"/>
</dbReference>
<proteinExistence type="inferred from homology"/>
<accession>Q9KSS4</accession>
<sequence length="318" mass="34346">MSNVKHSKLLILGSGPAGYTAAVYAARANLKPVLVTGMQQGGQLTTTTEVENWPGDAEGLTGPALMERMKEHAERFDTEIVFDHINSVDLSSRPFRLTGDSQEYTCDALIISTGASAKYLGLESEEAFKGRGVSACATCDGFFYRNQKVAVVGGGNTAVEEALYLSNIASEVHLVHRRDSFRSEKILIDRLMDKVANGNIVLHTHRTLDEVLGDEMGVTGVRLKDTQSDMTENLDVMGVFIAIGHQPNSQIFEGQLEMKNGYIVVKSGLEGNATQTSIEGVFAAGDVMDHNYRQAITSAGTGCMAALDAERYLDSQGK</sequence>
<organism>
    <name type="scientific">Vibrio cholerae serotype O1 (strain ATCC 39315 / El Tor Inaba N16961)</name>
    <dbReference type="NCBI Taxonomy" id="243277"/>
    <lineage>
        <taxon>Bacteria</taxon>
        <taxon>Pseudomonadati</taxon>
        <taxon>Pseudomonadota</taxon>
        <taxon>Gammaproteobacteria</taxon>
        <taxon>Vibrionales</taxon>
        <taxon>Vibrionaceae</taxon>
        <taxon>Vibrio</taxon>
    </lineage>
</organism>
<reference key="1">
    <citation type="journal article" date="2000" name="Nature">
        <title>DNA sequence of both chromosomes of the cholera pathogen Vibrio cholerae.</title>
        <authorList>
            <person name="Heidelberg J.F."/>
            <person name="Eisen J.A."/>
            <person name="Nelson W.C."/>
            <person name="Clayton R.A."/>
            <person name="Gwinn M.L."/>
            <person name="Dodson R.J."/>
            <person name="Haft D.H."/>
            <person name="Hickey E.K."/>
            <person name="Peterson J.D."/>
            <person name="Umayam L.A."/>
            <person name="Gill S.R."/>
            <person name="Nelson K.E."/>
            <person name="Read T.D."/>
            <person name="Tettelin H."/>
            <person name="Richardson D.L."/>
            <person name="Ermolaeva M.D."/>
            <person name="Vamathevan J.J."/>
            <person name="Bass S."/>
            <person name="Qin H."/>
            <person name="Dragoi I."/>
            <person name="Sellers P."/>
            <person name="McDonald L.A."/>
            <person name="Utterback T.R."/>
            <person name="Fleischmann R.D."/>
            <person name="Nierman W.C."/>
            <person name="White O."/>
            <person name="Salzberg S.L."/>
            <person name="Smith H.O."/>
            <person name="Colwell R.R."/>
            <person name="Mekalanos J.J."/>
            <person name="Venter J.C."/>
            <person name="Fraser C.M."/>
        </authorList>
    </citation>
    <scope>NUCLEOTIDE SEQUENCE [LARGE SCALE GENOMIC DNA]</scope>
    <source>
        <strain>ATCC 39315 / El Tor Inaba N16961</strain>
    </source>
</reference>
<keyword id="KW-0963">Cytoplasm</keyword>
<keyword id="KW-1015">Disulfide bond</keyword>
<keyword id="KW-0274">FAD</keyword>
<keyword id="KW-0285">Flavoprotein</keyword>
<keyword id="KW-0521">NADP</keyword>
<keyword id="KW-0560">Oxidoreductase</keyword>
<keyword id="KW-0676">Redox-active center</keyword>
<keyword id="KW-1185">Reference proteome</keyword>
<gene>
    <name type="primary">trxB</name>
    <name type="ordered locus">VC_1182</name>
</gene>